<reference key="1">
    <citation type="submission" date="2006-10" db="EMBL/GenBank/DDBJ databases">
        <authorList>
            <person name="Fleischmann R.D."/>
            <person name="Dodson R.J."/>
            <person name="Haft D.H."/>
            <person name="Merkel J.S."/>
            <person name="Nelson W.C."/>
            <person name="Fraser C.M."/>
        </authorList>
    </citation>
    <scope>NUCLEOTIDE SEQUENCE [LARGE SCALE GENOMIC DNA]</scope>
    <source>
        <strain>104</strain>
    </source>
</reference>
<accession>A0QFB2</accession>
<evidence type="ECO:0000255" key="1">
    <source>
        <dbReference type="HAMAP-Rule" id="MF_02112"/>
    </source>
</evidence>
<evidence type="ECO:0000256" key="2">
    <source>
        <dbReference type="SAM" id="MobiDB-lite"/>
    </source>
</evidence>
<evidence type="ECO:0000305" key="3"/>
<proteinExistence type="inferred from homology"/>
<protein>
    <recommendedName>
        <fullName evidence="1">Proteasome-associated ATPase</fullName>
    </recommendedName>
    <alternativeName>
        <fullName evidence="1">AAA ATPase forming ring-shaped complexes</fullName>
        <shortName evidence="1">ARC</shortName>
    </alternativeName>
    <alternativeName>
        <fullName evidence="1">Mycobacterial proteasome ATPase</fullName>
    </alternativeName>
</protein>
<sequence>MGSSERSEAFGTPRESDMSSGDEAELEELRREAAMLREQLEHAVGSHGGARSARDVHQLEARIDSLAARNSKLMETLKEARQQLLALREEVDRLGQPPSGYGVLLATHEDDTVDVFTSGRKMRLTCSPNIDVSLLRKGQTVRLNEALTVVEAGTFESVGEISTLRELLADGHRALVVGHADEERIVWLAEPLVADNLPDGHPDALNDDTRPRKLRPGDSLLVDTKAGYAFERIPKAEVEDLVLEEVPDVSYEDIGGLTRQIEQIRDAVELPFLHKELYREYALRPPKGVLLYGPPGCGKTLIAKAVANSLAKKMAEVRGDDAREAKSYFLNIKGPELLNKFVGETERHIRLIFQRAREKASEGTPVIVFFDEMDSIFRTRGTGVSSDVETTVVPQLLSEIDGVEGLENVIVIGASNREDMIDPAILRPGRLDVKIKIERPDAEAAQDIFSKYLTEELPLHADDLAEFGGDRTACIKAMIEKVVERMYAEIDDNRFLEVTYANGDKEVMYFKDFNSGAMIQNVVDRAKKNAIKSVLETGQPGLRIQHLLDSIVDEFAENEDLPNTTNPDDWARISGKKGERIVYIRTLVTGKSSSASRAIDTESNLGQYL</sequence>
<name>ARC_MYCA1</name>
<dbReference type="EMBL" id="CP000479">
    <property type="protein sequence ID" value="ABK67891.1"/>
    <property type="status" value="ALT_INIT"/>
    <property type="molecule type" value="Genomic_DNA"/>
</dbReference>
<dbReference type="SMR" id="A0QFB2"/>
<dbReference type="KEGG" id="mav:MAV_2400"/>
<dbReference type="HOGENOM" id="CLU_036054_0_0_11"/>
<dbReference type="UniPathway" id="UPA00997"/>
<dbReference type="Proteomes" id="UP000001574">
    <property type="component" value="Chromosome"/>
</dbReference>
<dbReference type="GO" id="GO:0000502">
    <property type="term" value="C:proteasome complex"/>
    <property type="evidence" value="ECO:0007669"/>
    <property type="project" value="UniProtKB-KW"/>
</dbReference>
<dbReference type="GO" id="GO:0005524">
    <property type="term" value="F:ATP binding"/>
    <property type="evidence" value="ECO:0007669"/>
    <property type="project" value="UniProtKB-UniRule"/>
</dbReference>
<dbReference type="GO" id="GO:0016887">
    <property type="term" value="F:ATP hydrolysis activity"/>
    <property type="evidence" value="ECO:0007669"/>
    <property type="project" value="UniProtKB-UniRule"/>
</dbReference>
<dbReference type="GO" id="GO:0019941">
    <property type="term" value="P:modification-dependent protein catabolic process"/>
    <property type="evidence" value="ECO:0007669"/>
    <property type="project" value="InterPro"/>
</dbReference>
<dbReference type="GO" id="GO:0010498">
    <property type="term" value="P:proteasomal protein catabolic process"/>
    <property type="evidence" value="ECO:0007669"/>
    <property type="project" value="InterPro"/>
</dbReference>
<dbReference type="FunFam" id="1.20.5.170:FF:000018">
    <property type="entry name" value="AAA ATPase forming ring-shaped complexes"/>
    <property type="match status" value="1"/>
</dbReference>
<dbReference type="FunFam" id="2.40.50.140:FF:000169">
    <property type="entry name" value="AAA ATPase forming ring-shaped complexes"/>
    <property type="match status" value="1"/>
</dbReference>
<dbReference type="FunFam" id="3.40.50.300:FF:000155">
    <property type="entry name" value="AAA ATPase forming ring-shaped complexes"/>
    <property type="match status" value="1"/>
</dbReference>
<dbReference type="Gene3D" id="1.10.8.60">
    <property type="match status" value="1"/>
</dbReference>
<dbReference type="Gene3D" id="1.20.5.170">
    <property type="match status" value="1"/>
</dbReference>
<dbReference type="Gene3D" id="2.40.50.140">
    <property type="entry name" value="Nucleic acid-binding proteins"/>
    <property type="match status" value="2"/>
</dbReference>
<dbReference type="Gene3D" id="3.40.50.300">
    <property type="entry name" value="P-loop containing nucleotide triphosphate hydrolases"/>
    <property type="match status" value="1"/>
</dbReference>
<dbReference type="HAMAP" id="MF_02112">
    <property type="entry name" value="ARC_ATPase"/>
    <property type="match status" value="1"/>
</dbReference>
<dbReference type="InterPro" id="IPR003593">
    <property type="entry name" value="AAA+_ATPase"/>
</dbReference>
<dbReference type="InterPro" id="IPR050168">
    <property type="entry name" value="AAA_ATPase_domain"/>
</dbReference>
<dbReference type="InterPro" id="IPR003959">
    <property type="entry name" value="ATPase_AAA_core"/>
</dbReference>
<dbReference type="InterPro" id="IPR003960">
    <property type="entry name" value="ATPase_AAA_CS"/>
</dbReference>
<dbReference type="InterPro" id="IPR012340">
    <property type="entry name" value="NA-bd_OB-fold"/>
</dbReference>
<dbReference type="InterPro" id="IPR027417">
    <property type="entry name" value="P-loop_NTPase"/>
</dbReference>
<dbReference type="InterPro" id="IPR032501">
    <property type="entry name" value="Prot_ATP_ID_OB_2nd"/>
</dbReference>
<dbReference type="InterPro" id="IPR041626">
    <property type="entry name" value="Prot_ATP_ID_OB_N"/>
</dbReference>
<dbReference type="InterPro" id="IPR022482">
    <property type="entry name" value="Proteasome_ATPase"/>
</dbReference>
<dbReference type="NCBIfam" id="TIGR03689">
    <property type="entry name" value="pup_AAA"/>
    <property type="match status" value="1"/>
</dbReference>
<dbReference type="PANTHER" id="PTHR23077">
    <property type="entry name" value="AAA-FAMILY ATPASE"/>
    <property type="match status" value="1"/>
</dbReference>
<dbReference type="PANTHER" id="PTHR23077:SF144">
    <property type="entry name" value="PROTEASOME-ASSOCIATED ATPASE"/>
    <property type="match status" value="1"/>
</dbReference>
<dbReference type="Pfam" id="PF00004">
    <property type="entry name" value="AAA"/>
    <property type="match status" value="1"/>
</dbReference>
<dbReference type="Pfam" id="PF16450">
    <property type="entry name" value="Prot_ATP_ID_OB_C"/>
    <property type="match status" value="1"/>
</dbReference>
<dbReference type="Pfam" id="PF17758">
    <property type="entry name" value="Prot_ATP_ID_OB_N"/>
    <property type="match status" value="1"/>
</dbReference>
<dbReference type="SMART" id="SM00382">
    <property type="entry name" value="AAA"/>
    <property type="match status" value="1"/>
</dbReference>
<dbReference type="SUPFAM" id="SSF52540">
    <property type="entry name" value="P-loop containing nucleoside triphosphate hydrolases"/>
    <property type="match status" value="1"/>
</dbReference>
<dbReference type="PROSITE" id="PS00674">
    <property type="entry name" value="AAA"/>
    <property type="match status" value="1"/>
</dbReference>
<organism>
    <name type="scientific">Mycobacterium avium (strain 104)</name>
    <dbReference type="NCBI Taxonomy" id="243243"/>
    <lineage>
        <taxon>Bacteria</taxon>
        <taxon>Bacillati</taxon>
        <taxon>Actinomycetota</taxon>
        <taxon>Actinomycetes</taxon>
        <taxon>Mycobacteriales</taxon>
        <taxon>Mycobacteriaceae</taxon>
        <taxon>Mycobacterium</taxon>
        <taxon>Mycobacterium avium complex (MAC)</taxon>
    </lineage>
</organism>
<feature type="chain" id="PRO_0000396993" description="Proteasome-associated ATPase">
    <location>
        <begin position="1"/>
        <end position="609"/>
    </location>
</feature>
<feature type="region of interest" description="Disordered" evidence="2">
    <location>
        <begin position="1"/>
        <end position="27"/>
    </location>
</feature>
<feature type="region of interest" description="Docks into pockets in the proteasome alpha-ring" evidence="1">
    <location>
        <begin position="608"/>
        <end position="609"/>
    </location>
</feature>
<feature type="coiled-coil region" evidence="1">
    <location>
        <begin position="17"/>
        <end position="96"/>
    </location>
</feature>
<feature type="binding site" evidence="1">
    <location>
        <begin position="296"/>
        <end position="301"/>
    </location>
    <ligand>
        <name>ATP</name>
        <dbReference type="ChEBI" id="CHEBI:30616"/>
    </ligand>
</feature>
<comment type="function">
    <text evidence="1">ATPase which is responsible for recognizing, binding, unfolding and translocation of pupylated proteins into the bacterial 20S proteasome core particle. May be essential for opening the gate of the 20S proteasome via an interaction with its C-terminus, thereby allowing substrate entry and access to the site of proteolysis. Thus, the C-termini of the proteasomal ATPase may function like a 'key in a lock' to induce gate opening and therefore regulate proteolysis.</text>
</comment>
<comment type="pathway">
    <text evidence="1">Protein degradation; proteasomal Pup-dependent pathway.</text>
</comment>
<comment type="subunit">
    <text evidence="1">Homohexamer. Assembles into a hexameric ring structure that caps the 20S proteasome core. Strongly interacts with the prokaryotic ubiquitin-like protein Pup through a hydrophobic interface; the interacting region of ARC lies in its N-terminal coiled-coil domain. There is one Pup binding site per ARC hexamer ring. Upon ATP-binding, the C-terminus of ARC interacts with the alpha-rings of the proteasome core, possibly by binding to the intersubunit pockets.</text>
</comment>
<comment type="domain">
    <text evidence="1">Consists of three main regions, an N-terminal coiled-coil domain that binds to protein Pup and functions as a docking station, an interdomain involved in ARC hexamerization, and a C-terminal ATPase domain of the AAA type.</text>
</comment>
<comment type="similarity">
    <text evidence="1">Belongs to the AAA ATPase family.</text>
</comment>
<comment type="sequence caution" evidence="3">
    <conflict type="erroneous initiation">
        <sequence resource="EMBL-CDS" id="ABK67891"/>
    </conflict>
    <text>Extended N-terminus.</text>
</comment>
<gene>
    <name evidence="1" type="primary">mpa</name>
    <name type="ordered locus">MAV_2400</name>
</gene>
<keyword id="KW-0067">ATP-binding</keyword>
<keyword id="KW-0143">Chaperone</keyword>
<keyword id="KW-0175">Coiled coil</keyword>
<keyword id="KW-0547">Nucleotide-binding</keyword>
<keyword id="KW-0647">Proteasome</keyword>